<evidence type="ECO:0000255" key="1">
    <source>
        <dbReference type="HAMAP-Rule" id="MF_01043"/>
    </source>
</evidence>
<evidence type="ECO:0000305" key="2"/>
<accession>Q48U03</accession>
<reference key="1">
    <citation type="journal article" date="2005" name="J. Infect. Dis.">
        <title>Genome sequence of a serotype M28 strain of group A Streptococcus: potential new insights into puerperal sepsis and bacterial disease specificity.</title>
        <authorList>
            <person name="Green N.M."/>
            <person name="Zhang S."/>
            <person name="Porcella S.F."/>
            <person name="Nagiec M.J."/>
            <person name="Barbian K.D."/>
            <person name="Beres S.B."/>
            <person name="Lefebvre R.B."/>
            <person name="Musser J.M."/>
        </authorList>
    </citation>
    <scope>NUCLEOTIDE SEQUENCE [LARGE SCALE GENOMIC DNA]</scope>
    <source>
        <strain>MGAS6180</strain>
    </source>
</reference>
<protein>
    <recommendedName>
        <fullName evidence="1">Glycerol-3-phosphate acyltransferase</fullName>
    </recommendedName>
    <alternativeName>
        <fullName evidence="1">Acyl-PO4 G3P acyltransferase</fullName>
    </alternativeName>
    <alternativeName>
        <fullName evidence="1">Acyl-phosphate--glycerol-3-phosphate acyltransferase</fullName>
    </alternativeName>
    <alternativeName>
        <fullName evidence="1">G3P acyltransferase</fullName>
        <shortName evidence="1">GPAT</shortName>
        <ecNumber evidence="1">2.3.1.275</ecNumber>
    </alternativeName>
    <alternativeName>
        <fullName evidence="1">Lysophosphatidic acid synthase</fullName>
        <shortName evidence="1">LPA synthase</shortName>
    </alternativeName>
</protein>
<comment type="function">
    <text evidence="1">Catalyzes the transfer of an acyl group from acyl-phosphate (acyl-PO(4)) to glycerol-3-phosphate (G3P) to form lysophosphatidic acid (LPA). This enzyme utilizes acyl-phosphate as fatty acyl donor, but not acyl-CoA or acyl-ACP.</text>
</comment>
<comment type="catalytic activity">
    <reaction evidence="1">
        <text>an acyl phosphate + sn-glycerol 3-phosphate = a 1-acyl-sn-glycero-3-phosphate + phosphate</text>
        <dbReference type="Rhea" id="RHEA:34075"/>
        <dbReference type="ChEBI" id="CHEBI:43474"/>
        <dbReference type="ChEBI" id="CHEBI:57597"/>
        <dbReference type="ChEBI" id="CHEBI:57970"/>
        <dbReference type="ChEBI" id="CHEBI:59918"/>
        <dbReference type="EC" id="2.3.1.275"/>
    </reaction>
</comment>
<comment type="pathway">
    <text evidence="1">Lipid metabolism; phospholipid metabolism.</text>
</comment>
<comment type="subunit">
    <text evidence="1">Probably interacts with PlsX.</text>
</comment>
<comment type="subcellular location">
    <subcellularLocation>
        <location evidence="1">Cell membrane</location>
        <topology evidence="1">Multi-pass membrane protein</topology>
    </subcellularLocation>
</comment>
<comment type="similarity">
    <text evidence="1">Belongs to the PlsY family.</text>
</comment>
<comment type="sequence caution" evidence="2">
    <conflict type="erroneous initiation">
        <sequence resource="EMBL-CDS" id="AAX71803"/>
    </conflict>
</comment>
<sequence length="213" mass="23369">MKLLLFITIAYLLGSIPTGLWIGQYFYHINLREHGSGNTGTTNTFRILGVKAGTATLAIDMFKGTLSILLPIIFGMTSISSIAIGFFAVLGHTFPIFANFKGGKAVATSAGVLLGFAPLYLFFLASIFVLVLYLFSMISLASVVSAIVGVLSVLTFPAIHFLLPNYDYFLTFIVILLAFIIIIRHKDNISRIKHHTENLIPWGLNLSKQVPKK</sequence>
<feature type="chain" id="PRO_0000188468" description="Glycerol-3-phosphate acyltransferase">
    <location>
        <begin position="1"/>
        <end position="213"/>
    </location>
</feature>
<feature type="transmembrane region" description="Helical" evidence="1">
    <location>
        <begin position="3"/>
        <end position="23"/>
    </location>
</feature>
<feature type="transmembrane region" description="Helical" evidence="1">
    <location>
        <begin position="68"/>
        <end position="88"/>
    </location>
</feature>
<feature type="transmembrane region" description="Helical" evidence="1">
    <location>
        <begin position="112"/>
        <end position="132"/>
    </location>
</feature>
<feature type="transmembrane region" description="Helical" evidence="1">
    <location>
        <begin position="134"/>
        <end position="154"/>
    </location>
</feature>
<feature type="transmembrane region" description="Helical" evidence="1">
    <location>
        <begin position="163"/>
        <end position="183"/>
    </location>
</feature>
<organism>
    <name type="scientific">Streptococcus pyogenes serotype M28 (strain MGAS6180)</name>
    <dbReference type="NCBI Taxonomy" id="319701"/>
    <lineage>
        <taxon>Bacteria</taxon>
        <taxon>Bacillati</taxon>
        <taxon>Bacillota</taxon>
        <taxon>Bacilli</taxon>
        <taxon>Lactobacillales</taxon>
        <taxon>Streptococcaceae</taxon>
        <taxon>Streptococcus</taxon>
    </lineage>
</organism>
<gene>
    <name evidence="1" type="primary">plsY</name>
    <name type="ordered locus">M28_Spy0690</name>
</gene>
<name>PLSY_STRPM</name>
<dbReference type="EC" id="2.3.1.275" evidence="1"/>
<dbReference type="EMBL" id="CP000056">
    <property type="protein sequence ID" value="AAX71803.1"/>
    <property type="status" value="ALT_INIT"/>
    <property type="molecule type" value="Genomic_DNA"/>
</dbReference>
<dbReference type="RefSeq" id="WP_002984911.1">
    <property type="nucleotide sequence ID" value="NC_007296.2"/>
</dbReference>
<dbReference type="SMR" id="Q48U03"/>
<dbReference type="GeneID" id="69900991"/>
<dbReference type="KEGG" id="spb:M28_Spy0690"/>
<dbReference type="HOGENOM" id="CLU_081254_4_0_9"/>
<dbReference type="UniPathway" id="UPA00085"/>
<dbReference type="GO" id="GO:0005886">
    <property type="term" value="C:plasma membrane"/>
    <property type="evidence" value="ECO:0007669"/>
    <property type="project" value="UniProtKB-SubCell"/>
</dbReference>
<dbReference type="GO" id="GO:0043772">
    <property type="term" value="F:acyl-phosphate glycerol-3-phosphate acyltransferase activity"/>
    <property type="evidence" value="ECO:0007669"/>
    <property type="project" value="UniProtKB-UniRule"/>
</dbReference>
<dbReference type="GO" id="GO:0008654">
    <property type="term" value="P:phospholipid biosynthetic process"/>
    <property type="evidence" value="ECO:0007669"/>
    <property type="project" value="UniProtKB-UniRule"/>
</dbReference>
<dbReference type="HAMAP" id="MF_01043">
    <property type="entry name" value="PlsY"/>
    <property type="match status" value="1"/>
</dbReference>
<dbReference type="InterPro" id="IPR003811">
    <property type="entry name" value="G3P_acylTferase_PlsY"/>
</dbReference>
<dbReference type="NCBIfam" id="TIGR00023">
    <property type="entry name" value="glycerol-3-phosphate 1-O-acyltransferase PlsY"/>
    <property type="match status" value="1"/>
</dbReference>
<dbReference type="PANTHER" id="PTHR30309:SF0">
    <property type="entry name" value="GLYCEROL-3-PHOSPHATE ACYLTRANSFERASE-RELATED"/>
    <property type="match status" value="1"/>
</dbReference>
<dbReference type="PANTHER" id="PTHR30309">
    <property type="entry name" value="INNER MEMBRANE PROTEIN YGIH"/>
    <property type="match status" value="1"/>
</dbReference>
<dbReference type="Pfam" id="PF02660">
    <property type="entry name" value="G3P_acyltransf"/>
    <property type="match status" value="1"/>
</dbReference>
<dbReference type="SMART" id="SM01207">
    <property type="entry name" value="G3P_acyltransf"/>
    <property type="match status" value="1"/>
</dbReference>
<proteinExistence type="inferred from homology"/>
<keyword id="KW-1003">Cell membrane</keyword>
<keyword id="KW-0444">Lipid biosynthesis</keyword>
<keyword id="KW-0443">Lipid metabolism</keyword>
<keyword id="KW-0472">Membrane</keyword>
<keyword id="KW-0594">Phospholipid biosynthesis</keyword>
<keyword id="KW-1208">Phospholipid metabolism</keyword>
<keyword id="KW-0808">Transferase</keyword>
<keyword id="KW-0812">Transmembrane</keyword>
<keyword id="KW-1133">Transmembrane helix</keyword>